<organism>
    <name type="scientific">Alternaria alternata</name>
    <name type="common">Alternaria rot fungus</name>
    <name type="synonym">Torula alternata</name>
    <dbReference type="NCBI Taxonomy" id="5599"/>
    <lineage>
        <taxon>Eukaryota</taxon>
        <taxon>Fungi</taxon>
        <taxon>Dikarya</taxon>
        <taxon>Ascomycota</taxon>
        <taxon>Pezizomycotina</taxon>
        <taxon>Dothideomycetes</taxon>
        <taxon>Pleosporomycetidae</taxon>
        <taxon>Pleosporales</taxon>
        <taxon>Pleosporineae</taxon>
        <taxon>Pleosporaceae</taxon>
        <taxon>Alternaria</taxon>
        <taxon>Alternaria sect. Alternaria</taxon>
        <taxon>Alternaria alternata complex</taxon>
    </lineage>
</organism>
<accession>Q00002</accession>
<accession>P87325</accession>
<proteinExistence type="evidence at protein level"/>
<name>PDI_ALTAL</name>
<comment type="function">
    <text evidence="1">Participates in the folding of proteins containing disulfide bonds, may be involved in glycosylation, prolyl hydroxylation and triglyceride transfer.</text>
</comment>
<comment type="catalytic activity">
    <reaction>
        <text>Catalyzes the rearrangement of -S-S- bonds in proteins.</text>
        <dbReference type="EC" id="5.3.4.1"/>
    </reaction>
</comment>
<comment type="subcellular location">
    <subcellularLocation>
        <location evidence="3">Endoplasmic reticulum lumen</location>
    </subcellularLocation>
</comment>
<comment type="allergen">
    <text evidence="5">Causes an allergic reaction in human.</text>
</comment>
<comment type="similarity">
    <text evidence="6">Belongs to the protein disulfide isomerase family.</text>
</comment>
<reference key="1">
    <citation type="journal article" date="1996" name="Adv. Exp. Med. Biol.">
        <title>Molecular characterization of Alternaria alternata and Cladosporium herbarum allergens.</title>
        <authorList>
            <person name="Achatz G."/>
            <person name="Oberkofler H."/>
            <person name="Lechenauer E."/>
            <person name="Simon B."/>
            <person name="Unger A."/>
            <person name="Kandler D."/>
            <person name="Ebner C."/>
            <person name="Prillinger H."/>
            <person name="Kraft D."/>
            <person name="Breitenbach M."/>
        </authorList>
    </citation>
    <scope>NUCLEOTIDE SEQUENCE [MRNA]</scope>
    <scope>ALLERGEN</scope>
</reference>
<reference key="2">
    <citation type="submission" date="1996-12" db="EMBL/GenBank/DDBJ databases">
        <authorList>
            <person name="Unger A.M."/>
            <person name="Lechenauer E."/>
            <person name="Simon B."/>
            <person name="Oberkofler H."/>
            <person name="Probst G."/>
            <person name="Achatz G."/>
            <person name="Breitenbach M."/>
        </authorList>
    </citation>
    <scope>NUCLEOTIDE SEQUENCE [MRNA]</scope>
    <source>
        <strain>08-0203-Berlin</strain>
    </source>
</reference>
<dbReference type="EC" id="5.3.4.1"/>
<dbReference type="EMBL" id="X84217">
    <property type="protein sequence ID" value="CAA58999.1"/>
    <property type="molecule type" value="mRNA"/>
</dbReference>
<dbReference type="EMBL" id="U82634">
    <property type="protein sequence ID" value="AAB40401.1"/>
    <property type="molecule type" value="mRNA"/>
</dbReference>
<dbReference type="SMR" id="Q00002"/>
<dbReference type="Allergome" id="18">
    <property type="allergen name" value="Alt a 4"/>
</dbReference>
<dbReference type="Allergome" id="3061">
    <property type="allergen name" value="Alt a 4.0101"/>
</dbReference>
<dbReference type="VEuPathDB" id="FungiDB:CC77DRAFT_1037698"/>
<dbReference type="GO" id="GO:0005788">
    <property type="term" value="C:endoplasmic reticulum lumen"/>
    <property type="evidence" value="ECO:0007669"/>
    <property type="project" value="UniProtKB-SubCell"/>
</dbReference>
<dbReference type="GO" id="GO:0003756">
    <property type="term" value="F:protein disulfide isomerase activity"/>
    <property type="evidence" value="ECO:0007669"/>
    <property type="project" value="UniProtKB-EC"/>
</dbReference>
<dbReference type="GO" id="GO:0006457">
    <property type="term" value="P:protein folding"/>
    <property type="evidence" value="ECO:0007669"/>
    <property type="project" value="TreeGrafter"/>
</dbReference>
<dbReference type="GO" id="GO:0034976">
    <property type="term" value="P:response to endoplasmic reticulum stress"/>
    <property type="evidence" value="ECO:0007669"/>
    <property type="project" value="TreeGrafter"/>
</dbReference>
<dbReference type="CDD" id="cd02995">
    <property type="entry name" value="PDI_a_PDI_a'_C"/>
    <property type="match status" value="1"/>
</dbReference>
<dbReference type="CDD" id="cd02982">
    <property type="entry name" value="PDI_b'_family"/>
    <property type="match status" value="1"/>
</dbReference>
<dbReference type="CDD" id="cd02981">
    <property type="entry name" value="PDI_b_family"/>
    <property type="match status" value="1"/>
</dbReference>
<dbReference type="FunFam" id="3.40.30.10:FF:000139">
    <property type="entry name" value="Protein disulfide-isomerase"/>
    <property type="match status" value="1"/>
</dbReference>
<dbReference type="FunFam" id="3.40.30.10:FF:000185">
    <property type="entry name" value="Protein disulfide-isomerase"/>
    <property type="match status" value="1"/>
</dbReference>
<dbReference type="Gene3D" id="1.20.120.20">
    <property type="entry name" value="Apolipoprotein"/>
    <property type="match status" value="1"/>
</dbReference>
<dbReference type="Gene3D" id="3.40.30.10">
    <property type="entry name" value="Glutaredoxin"/>
    <property type="match status" value="3"/>
</dbReference>
<dbReference type="InterPro" id="IPR036249">
    <property type="entry name" value="Thioredoxin-like_sf"/>
</dbReference>
<dbReference type="InterPro" id="IPR017937">
    <property type="entry name" value="Thioredoxin_CS"/>
</dbReference>
<dbReference type="InterPro" id="IPR013766">
    <property type="entry name" value="Thioredoxin_domain"/>
</dbReference>
<dbReference type="PANTHER" id="PTHR18929">
    <property type="entry name" value="PROTEIN DISULFIDE ISOMERASE"/>
    <property type="match status" value="1"/>
</dbReference>
<dbReference type="PANTHER" id="PTHR18929:SF132">
    <property type="entry name" value="PROTEIN DISULFIDE-ISOMERASE A3"/>
    <property type="match status" value="1"/>
</dbReference>
<dbReference type="Pfam" id="PF00085">
    <property type="entry name" value="Thioredoxin"/>
    <property type="match status" value="1"/>
</dbReference>
<dbReference type="Pfam" id="PF13848">
    <property type="entry name" value="Thioredoxin_6"/>
    <property type="match status" value="1"/>
</dbReference>
<dbReference type="SUPFAM" id="SSF52833">
    <property type="entry name" value="Thioredoxin-like"/>
    <property type="match status" value="3"/>
</dbReference>
<dbReference type="PROSITE" id="PS00014">
    <property type="entry name" value="ER_TARGET"/>
    <property type="match status" value="1"/>
</dbReference>
<dbReference type="PROSITE" id="PS00194">
    <property type="entry name" value="THIOREDOXIN_1"/>
    <property type="match status" value="1"/>
</dbReference>
<dbReference type="PROSITE" id="PS51352">
    <property type="entry name" value="THIOREDOXIN_2"/>
    <property type="match status" value="1"/>
</dbReference>
<feature type="chain" id="PRO_0000120175" description="Protein disulfide-isomerase">
    <location>
        <begin position="1" status="less than"/>
        <end position="436"/>
    </location>
</feature>
<feature type="domain" description="Thioredoxin" evidence="2">
    <location>
        <begin position="216"/>
        <end position="365"/>
    </location>
</feature>
<feature type="region of interest" description="Disordered" evidence="4">
    <location>
        <begin position="328"/>
        <end position="436"/>
    </location>
</feature>
<feature type="short sequence motif" description="Prevents secretion from ER" evidence="3">
    <location>
        <begin position="433"/>
        <end position="436"/>
    </location>
</feature>
<feature type="compositionally biased region" description="Basic residues" evidence="4">
    <location>
        <begin position="334"/>
        <end position="343"/>
    </location>
</feature>
<feature type="compositionally biased region" description="Low complexity" evidence="4">
    <location>
        <begin position="362"/>
        <end position="377"/>
    </location>
</feature>
<feature type="compositionally biased region" description="Low complexity" evidence="4">
    <location>
        <begin position="385"/>
        <end position="436"/>
    </location>
</feature>
<feature type="active site" description="Nucleophile" evidence="1">
    <location>
        <position position="266"/>
    </location>
</feature>
<feature type="active site" description="Nucleophile" evidence="1">
    <location>
        <position position="269"/>
    </location>
</feature>
<feature type="site" description="Contributes to redox potential value" evidence="1">
    <location>
        <position position="267"/>
    </location>
</feature>
<feature type="site" description="Contributes to redox potential value" evidence="1">
    <location>
        <position position="268"/>
    </location>
</feature>
<feature type="disulfide bond" description="Redox-active" evidence="2">
    <location>
        <begin position="266"/>
        <end position="269"/>
    </location>
</feature>
<feature type="non-terminal residue">
    <location>
        <position position="1"/>
    </location>
</feature>
<protein>
    <recommendedName>
        <fullName>Protein disulfide-isomerase</fullName>
        <shortName>PDI</shortName>
        <ecNumber>5.3.4.1</ecNumber>
    </recommendedName>
    <allergenName>Alt a 4</allergenName>
</protein>
<evidence type="ECO:0000250" key="1"/>
<evidence type="ECO:0000255" key="2">
    <source>
        <dbReference type="PROSITE-ProRule" id="PRU00691"/>
    </source>
</evidence>
<evidence type="ECO:0000255" key="3">
    <source>
        <dbReference type="PROSITE-ProRule" id="PRU10138"/>
    </source>
</evidence>
<evidence type="ECO:0000256" key="4">
    <source>
        <dbReference type="SAM" id="MobiDB-lite"/>
    </source>
</evidence>
<evidence type="ECO:0000269" key="5">
    <source>
    </source>
</evidence>
<evidence type="ECO:0000305" key="6"/>
<sequence>ARDMTKQALPAVSEVTKDTLEEFKTADKVVLVAYFAADDKASNETFTSVANGLRDNFLFGATNDAALAKAEGVKQPGLVCTSPSTTARTSSPRPSMRTYPRLRKVASTPLIGEVGPETYAGYMAAGIPLAYIFAETPEEREEFAKELKPLALKHKGEINFATIDAKSFGQHAGNLNLKVGTWPAFAIQRTEKNEKFPTNQEAKITEKEIGKFVDDFLAGKIDPSIKSEPIPESNDGPVTVVVAHNYKDVVIDNDKDVLVEFYAPWCGHCKALAPKYEELGQLYASDELSKLVTIAKVDATLNDVPDEIQGFLPSSLFPLARRMPQSTTLVPHCRGSRPVHRRERLTQASASVGEAVEDATESAKASASSATDSAASAVSEGTETVKSGASVASDSASSAASEATKSVKSAASEVTNSASSAASEASASASSVKDEL</sequence>
<keyword id="KW-0020">Allergen</keyword>
<keyword id="KW-1015">Disulfide bond</keyword>
<keyword id="KW-0256">Endoplasmic reticulum</keyword>
<keyword id="KW-0413">Isomerase</keyword>
<keyword id="KW-0676">Redox-active center</keyword>